<feature type="chain" id="PRO_1000061791" description="Ribosomal RNA large subunit methyltransferase H">
    <location>
        <begin position="1"/>
        <end position="156"/>
    </location>
</feature>
<feature type="binding site" evidence="1">
    <location>
        <position position="73"/>
    </location>
    <ligand>
        <name>S-adenosyl-L-methionine</name>
        <dbReference type="ChEBI" id="CHEBI:59789"/>
    </ligand>
</feature>
<feature type="binding site" evidence="1">
    <location>
        <position position="104"/>
    </location>
    <ligand>
        <name>S-adenosyl-L-methionine</name>
        <dbReference type="ChEBI" id="CHEBI:59789"/>
    </ligand>
</feature>
<feature type="binding site" evidence="1">
    <location>
        <begin position="123"/>
        <end position="128"/>
    </location>
    <ligand>
        <name>S-adenosyl-L-methionine</name>
        <dbReference type="ChEBI" id="CHEBI:59789"/>
    </ligand>
</feature>
<dbReference type="EC" id="2.1.1.177" evidence="1"/>
<dbReference type="EMBL" id="CP000269">
    <property type="protein sequence ID" value="ABR89862.1"/>
    <property type="molecule type" value="Genomic_DNA"/>
</dbReference>
<dbReference type="RefSeq" id="WP_012078403.1">
    <property type="nucleotide sequence ID" value="NC_009659.1"/>
</dbReference>
<dbReference type="SMR" id="A6SVD2"/>
<dbReference type="STRING" id="375286.mma_0539"/>
<dbReference type="KEGG" id="mms:mma_0539"/>
<dbReference type="eggNOG" id="COG1576">
    <property type="taxonomic scope" value="Bacteria"/>
</dbReference>
<dbReference type="HOGENOM" id="CLU_100552_1_0_4"/>
<dbReference type="OrthoDB" id="9806643at2"/>
<dbReference type="Proteomes" id="UP000006388">
    <property type="component" value="Chromosome"/>
</dbReference>
<dbReference type="GO" id="GO:0005737">
    <property type="term" value="C:cytoplasm"/>
    <property type="evidence" value="ECO:0007669"/>
    <property type="project" value="UniProtKB-SubCell"/>
</dbReference>
<dbReference type="GO" id="GO:0070038">
    <property type="term" value="F:rRNA (pseudouridine-N3-)-methyltransferase activity"/>
    <property type="evidence" value="ECO:0007669"/>
    <property type="project" value="UniProtKB-UniRule"/>
</dbReference>
<dbReference type="CDD" id="cd18081">
    <property type="entry name" value="RlmH-like"/>
    <property type="match status" value="1"/>
</dbReference>
<dbReference type="Gene3D" id="3.40.1280.10">
    <property type="match status" value="1"/>
</dbReference>
<dbReference type="HAMAP" id="MF_00658">
    <property type="entry name" value="23SrRNA_methyltr_H"/>
    <property type="match status" value="1"/>
</dbReference>
<dbReference type="InterPro" id="IPR029028">
    <property type="entry name" value="Alpha/beta_knot_MTases"/>
</dbReference>
<dbReference type="InterPro" id="IPR003742">
    <property type="entry name" value="RlmH-like"/>
</dbReference>
<dbReference type="InterPro" id="IPR029026">
    <property type="entry name" value="tRNA_m1G_MTases_N"/>
</dbReference>
<dbReference type="NCBIfam" id="NF000986">
    <property type="entry name" value="PRK00103.1-4"/>
    <property type="match status" value="1"/>
</dbReference>
<dbReference type="NCBIfam" id="TIGR00246">
    <property type="entry name" value="tRNA_RlmH_YbeA"/>
    <property type="match status" value="1"/>
</dbReference>
<dbReference type="PANTHER" id="PTHR33603">
    <property type="entry name" value="METHYLTRANSFERASE"/>
    <property type="match status" value="1"/>
</dbReference>
<dbReference type="PANTHER" id="PTHR33603:SF1">
    <property type="entry name" value="RIBOSOMAL RNA LARGE SUBUNIT METHYLTRANSFERASE H"/>
    <property type="match status" value="1"/>
</dbReference>
<dbReference type="Pfam" id="PF02590">
    <property type="entry name" value="SPOUT_MTase"/>
    <property type="match status" value="1"/>
</dbReference>
<dbReference type="PIRSF" id="PIRSF004505">
    <property type="entry name" value="MT_bac"/>
    <property type="match status" value="1"/>
</dbReference>
<dbReference type="SUPFAM" id="SSF75217">
    <property type="entry name" value="alpha/beta knot"/>
    <property type="match status" value="1"/>
</dbReference>
<sequence length="156" mass="17343">MQLVIAAVGHKMPAWIESGFGEYAKRMPADCRVHLKEIKPVERSGSKTAETAMALERAKIEAALPKGARIIALDEHGKDLTSVQLAQLLTQWQQDGRDVAFIIGGADGLDAEFKKNADMLIRISSMTLPHGMVRVLLAEQLYRAWSITQNHPYHRV</sequence>
<evidence type="ECO:0000255" key="1">
    <source>
        <dbReference type="HAMAP-Rule" id="MF_00658"/>
    </source>
</evidence>
<organism>
    <name type="scientific">Janthinobacterium sp. (strain Marseille)</name>
    <name type="common">Minibacterium massiliensis</name>
    <dbReference type="NCBI Taxonomy" id="375286"/>
    <lineage>
        <taxon>Bacteria</taxon>
        <taxon>Pseudomonadati</taxon>
        <taxon>Pseudomonadota</taxon>
        <taxon>Betaproteobacteria</taxon>
        <taxon>Burkholderiales</taxon>
        <taxon>Oxalobacteraceae</taxon>
        <taxon>Janthinobacterium</taxon>
    </lineage>
</organism>
<keyword id="KW-0963">Cytoplasm</keyword>
<keyword id="KW-0489">Methyltransferase</keyword>
<keyword id="KW-0698">rRNA processing</keyword>
<keyword id="KW-0949">S-adenosyl-L-methionine</keyword>
<keyword id="KW-0808">Transferase</keyword>
<name>RLMH_JANMA</name>
<accession>A6SVD2</accession>
<proteinExistence type="inferred from homology"/>
<reference key="1">
    <citation type="journal article" date="2007" name="PLoS Genet.">
        <title>Genome analysis of Minibacterium massiliensis highlights the convergent evolution of water-living bacteria.</title>
        <authorList>
            <person name="Audic S."/>
            <person name="Robert C."/>
            <person name="Campagna B."/>
            <person name="Parinello H."/>
            <person name="Claverie J.-M."/>
            <person name="Raoult D."/>
            <person name="Drancourt M."/>
        </authorList>
    </citation>
    <scope>NUCLEOTIDE SEQUENCE [LARGE SCALE GENOMIC DNA]</scope>
    <source>
        <strain>Marseille</strain>
    </source>
</reference>
<protein>
    <recommendedName>
        <fullName evidence="1">Ribosomal RNA large subunit methyltransferase H</fullName>
        <ecNumber evidence="1">2.1.1.177</ecNumber>
    </recommendedName>
    <alternativeName>
        <fullName evidence="1">23S rRNA (pseudouridine1915-N3)-methyltransferase</fullName>
    </alternativeName>
    <alternativeName>
        <fullName evidence="1">23S rRNA m3Psi1915 methyltransferase</fullName>
    </alternativeName>
    <alternativeName>
        <fullName evidence="1">rRNA (pseudouridine-N3-)-methyltransferase RlmH</fullName>
    </alternativeName>
</protein>
<comment type="function">
    <text evidence="1">Specifically methylates the pseudouridine at position 1915 (m3Psi1915) in 23S rRNA.</text>
</comment>
<comment type="catalytic activity">
    <reaction evidence="1">
        <text>pseudouridine(1915) in 23S rRNA + S-adenosyl-L-methionine = N(3)-methylpseudouridine(1915) in 23S rRNA + S-adenosyl-L-homocysteine + H(+)</text>
        <dbReference type="Rhea" id="RHEA:42752"/>
        <dbReference type="Rhea" id="RHEA-COMP:10221"/>
        <dbReference type="Rhea" id="RHEA-COMP:10222"/>
        <dbReference type="ChEBI" id="CHEBI:15378"/>
        <dbReference type="ChEBI" id="CHEBI:57856"/>
        <dbReference type="ChEBI" id="CHEBI:59789"/>
        <dbReference type="ChEBI" id="CHEBI:65314"/>
        <dbReference type="ChEBI" id="CHEBI:74486"/>
        <dbReference type="EC" id="2.1.1.177"/>
    </reaction>
</comment>
<comment type="subunit">
    <text evidence="1">Homodimer.</text>
</comment>
<comment type="subcellular location">
    <subcellularLocation>
        <location evidence="1">Cytoplasm</location>
    </subcellularLocation>
</comment>
<comment type="similarity">
    <text evidence="1">Belongs to the RNA methyltransferase RlmH family.</text>
</comment>
<gene>
    <name evidence="1" type="primary">rlmH</name>
    <name type="ordered locus">mma_0539</name>
</gene>